<dbReference type="EMBL" id="CP001113">
    <property type="protein sequence ID" value="ACF61796.1"/>
    <property type="molecule type" value="Genomic_DNA"/>
</dbReference>
<dbReference type="RefSeq" id="WP_000739889.1">
    <property type="nucleotide sequence ID" value="NZ_CCMR01000003.1"/>
</dbReference>
<dbReference type="SMR" id="B4T2Y8"/>
<dbReference type="KEGG" id="see:SNSL254_A1253"/>
<dbReference type="HOGENOM" id="CLU_071003_1_2_6"/>
<dbReference type="Proteomes" id="UP000008824">
    <property type="component" value="Chromosome"/>
</dbReference>
<dbReference type="GO" id="GO:0042597">
    <property type="term" value="C:periplasmic space"/>
    <property type="evidence" value="ECO:0007669"/>
    <property type="project" value="UniProtKB-SubCell"/>
</dbReference>
<dbReference type="Gene3D" id="2.40.128.110">
    <property type="entry name" value="Lipid/polyisoprenoid-binding, YceI-like"/>
    <property type="match status" value="1"/>
</dbReference>
<dbReference type="HAMAP" id="MF_00780">
    <property type="entry name" value="UPF0312"/>
    <property type="match status" value="1"/>
</dbReference>
<dbReference type="InterPro" id="IPR007372">
    <property type="entry name" value="Lipid/polyisoprenoid-bd_YceI"/>
</dbReference>
<dbReference type="InterPro" id="IPR036761">
    <property type="entry name" value="TTHA0802/YceI-like_sf"/>
</dbReference>
<dbReference type="InterPro" id="IPR023480">
    <property type="entry name" value="UPF0312/YceI"/>
</dbReference>
<dbReference type="NCBIfam" id="NF002994">
    <property type="entry name" value="PRK03757.1"/>
    <property type="match status" value="1"/>
</dbReference>
<dbReference type="PANTHER" id="PTHR34406">
    <property type="entry name" value="PROTEIN YCEI"/>
    <property type="match status" value="1"/>
</dbReference>
<dbReference type="PANTHER" id="PTHR34406:SF1">
    <property type="entry name" value="PROTEIN YCEI"/>
    <property type="match status" value="1"/>
</dbReference>
<dbReference type="Pfam" id="PF04264">
    <property type="entry name" value="YceI"/>
    <property type="match status" value="1"/>
</dbReference>
<dbReference type="SMART" id="SM00867">
    <property type="entry name" value="YceI"/>
    <property type="match status" value="1"/>
</dbReference>
<dbReference type="SUPFAM" id="SSF101874">
    <property type="entry name" value="YceI-like"/>
    <property type="match status" value="1"/>
</dbReference>
<organism>
    <name type="scientific">Salmonella newport (strain SL254)</name>
    <dbReference type="NCBI Taxonomy" id="423368"/>
    <lineage>
        <taxon>Bacteria</taxon>
        <taxon>Pseudomonadati</taxon>
        <taxon>Pseudomonadota</taxon>
        <taxon>Gammaproteobacteria</taxon>
        <taxon>Enterobacterales</taxon>
        <taxon>Enterobacteriaceae</taxon>
        <taxon>Salmonella</taxon>
    </lineage>
</organism>
<comment type="subcellular location">
    <subcellularLocation>
        <location evidence="1">Periplasm</location>
    </subcellularLocation>
</comment>
<comment type="similarity">
    <text evidence="1">Belongs to the UPF0312 family. Type 1 subfamily.</text>
</comment>
<proteinExistence type="inferred from homology"/>
<feature type="signal peptide" evidence="1">
    <location>
        <begin position="1"/>
        <end position="22"/>
    </location>
</feature>
<feature type="chain" id="PRO_1000200479" description="Protein YceI">
    <location>
        <begin position="23"/>
        <end position="191"/>
    </location>
</feature>
<reference key="1">
    <citation type="journal article" date="2011" name="J. Bacteriol.">
        <title>Comparative genomics of 28 Salmonella enterica isolates: evidence for CRISPR-mediated adaptive sublineage evolution.</title>
        <authorList>
            <person name="Fricke W.F."/>
            <person name="Mammel M.K."/>
            <person name="McDermott P.F."/>
            <person name="Tartera C."/>
            <person name="White D.G."/>
            <person name="Leclerc J.E."/>
            <person name="Ravel J."/>
            <person name="Cebula T.A."/>
        </authorList>
    </citation>
    <scope>NUCLEOTIDE SEQUENCE [LARGE SCALE GENOMIC DNA]</scope>
    <source>
        <strain>SL254</strain>
    </source>
</reference>
<evidence type="ECO:0000255" key="1">
    <source>
        <dbReference type="HAMAP-Rule" id="MF_00780"/>
    </source>
</evidence>
<protein>
    <recommendedName>
        <fullName evidence="1">Protein YceI</fullName>
    </recommendedName>
</protein>
<name>YCEI_SALNS</name>
<gene>
    <name evidence="1" type="primary">yceI</name>
    <name type="ordered locus">SNSL254_A1253</name>
</gene>
<sequence>MKKNLLGFTLASLLFTTGSAVAAEYKIDKEGQHAFVNFRIQHLSYSWLYGTFKDFDGTFTFDEKNPSADKVNVTINTNSVDTNHAERDKHLRSAEFLNVAKFPQATFTSTSVKKEGDELDITGNLTLNGVTKPVTLEAKLMGQGDDPWGGKRAGFEAEGKIKLKDFNITTDLGPASQEVELIISVEGVQQK</sequence>
<accession>B4T2Y8</accession>
<keyword id="KW-0574">Periplasm</keyword>
<keyword id="KW-0732">Signal</keyword>